<name>CEP68_HUMAN</name>
<organism>
    <name type="scientific">Homo sapiens</name>
    <name type="common">Human</name>
    <dbReference type="NCBI Taxonomy" id="9606"/>
    <lineage>
        <taxon>Eukaryota</taxon>
        <taxon>Metazoa</taxon>
        <taxon>Chordata</taxon>
        <taxon>Craniata</taxon>
        <taxon>Vertebrata</taxon>
        <taxon>Euteleostomi</taxon>
        <taxon>Mammalia</taxon>
        <taxon>Eutheria</taxon>
        <taxon>Euarchontoglires</taxon>
        <taxon>Primates</taxon>
        <taxon>Haplorrhini</taxon>
        <taxon>Catarrhini</taxon>
        <taxon>Hominidae</taxon>
        <taxon>Homo</taxon>
    </lineage>
</organism>
<accession>Q76N32</accession>
<accession>B4DRQ1</accession>
<accession>D6W5F1</accession>
<accession>D6W5F2</accession>
<accession>O60326</accession>
<accession>Q9BQ18</accession>
<accession>Q9UDM9</accession>
<reference key="1">
    <citation type="journal article" date="1998" name="DNA Res.">
        <title>Prediction of the coding sequences of unidentified human genes. IX. The complete sequences of 100 new cDNA clones from brain which can code for large proteins in vitro.</title>
        <authorList>
            <person name="Nagase T."/>
            <person name="Ishikawa K."/>
            <person name="Miyajima N."/>
            <person name="Tanaka A."/>
            <person name="Kotani H."/>
            <person name="Nomura N."/>
            <person name="Ohara O."/>
        </authorList>
    </citation>
    <scope>NUCLEOTIDE SEQUENCE [LARGE SCALE MRNA] (ISOFORM 1)</scope>
    <source>
        <tissue>Brain</tissue>
    </source>
</reference>
<reference key="2">
    <citation type="journal article" date="2002" name="DNA Res.">
        <title>Construction of expression-ready cDNA clones for KIAA genes: manual curation of 330 KIAA cDNA clones.</title>
        <authorList>
            <person name="Nakajima D."/>
            <person name="Okazaki N."/>
            <person name="Yamakawa H."/>
            <person name="Kikuno R."/>
            <person name="Ohara O."/>
            <person name="Nagase T."/>
        </authorList>
    </citation>
    <scope>SEQUENCE REVISION</scope>
</reference>
<reference key="3">
    <citation type="journal article" date="2004" name="Nat. Genet.">
        <title>Complete sequencing and characterization of 21,243 full-length human cDNAs.</title>
        <authorList>
            <person name="Ota T."/>
            <person name="Suzuki Y."/>
            <person name="Nishikawa T."/>
            <person name="Otsuki T."/>
            <person name="Sugiyama T."/>
            <person name="Irie R."/>
            <person name="Wakamatsu A."/>
            <person name="Hayashi K."/>
            <person name="Sato H."/>
            <person name="Nagai K."/>
            <person name="Kimura K."/>
            <person name="Makita H."/>
            <person name="Sekine M."/>
            <person name="Obayashi M."/>
            <person name="Nishi T."/>
            <person name="Shibahara T."/>
            <person name="Tanaka T."/>
            <person name="Ishii S."/>
            <person name="Yamamoto J."/>
            <person name="Saito K."/>
            <person name="Kawai Y."/>
            <person name="Isono Y."/>
            <person name="Nakamura Y."/>
            <person name="Nagahari K."/>
            <person name="Murakami K."/>
            <person name="Yasuda T."/>
            <person name="Iwayanagi T."/>
            <person name="Wagatsuma M."/>
            <person name="Shiratori A."/>
            <person name="Sudo H."/>
            <person name="Hosoiri T."/>
            <person name="Kaku Y."/>
            <person name="Kodaira H."/>
            <person name="Kondo H."/>
            <person name="Sugawara M."/>
            <person name="Takahashi M."/>
            <person name="Kanda K."/>
            <person name="Yokoi T."/>
            <person name="Furuya T."/>
            <person name="Kikkawa E."/>
            <person name="Omura Y."/>
            <person name="Abe K."/>
            <person name="Kamihara K."/>
            <person name="Katsuta N."/>
            <person name="Sato K."/>
            <person name="Tanikawa M."/>
            <person name="Yamazaki M."/>
            <person name="Ninomiya K."/>
            <person name="Ishibashi T."/>
            <person name="Yamashita H."/>
            <person name="Murakawa K."/>
            <person name="Fujimori K."/>
            <person name="Tanai H."/>
            <person name="Kimata M."/>
            <person name="Watanabe M."/>
            <person name="Hiraoka S."/>
            <person name="Chiba Y."/>
            <person name="Ishida S."/>
            <person name="Ono Y."/>
            <person name="Takiguchi S."/>
            <person name="Watanabe S."/>
            <person name="Yosida M."/>
            <person name="Hotuta T."/>
            <person name="Kusano J."/>
            <person name="Kanehori K."/>
            <person name="Takahashi-Fujii A."/>
            <person name="Hara H."/>
            <person name="Tanase T.-O."/>
            <person name="Nomura Y."/>
            <person name="Togiya S."/>
            <person name="Komai F."/>
            <person name="Hara R."/>
            <person name="Takeuchi K."/>
            <person name="Arita M."/>
            <person name="Imose N."/>
            <person name="Musashino K."/>
            <person name="Yuuki H."/>
            <person name="Oshima A."/>
            <person name="Sasaki N."/>
            <person name="Aotsuka S."/>
            <person name="Yoshikawa Y."/>
            <person name="Matsunawa H."/>
            <person name="Ichihara T."/>
            <person name="Shiohata N."/>
            <person name="Sano S."/>
            <person name="Moriya S."/>
            <person name="Momiyama H."/>
            <person name="Satoh N."/>
            <person name="Takami S."/>
            <person name="Terashima Y."/>
            <person name="Suzuki O."/>
            <person name="Nakagawa S."/>
            <person name="Senoh A."/>
            <person name="Mizoguchi H."/>
            <person name="Goto Y."/>
            <person name="Shimizu F."/>
            <person name="Wakebe H."/>
            <person name="Hishigaki H."/>
            <person name="Watanabe T."/>
            <person name="Sugiyama A."/>
            <person name="Takemoto M."/>
            <person name="Kawakami B."/>
            <person name="Yamazaki M."/>
            <person name="Watanabe K."/>
            <person name="Kumagai A."/>
            <person name="Itakura S."/>
            <person name="Fukuzumi Y."/>
            <person name="Fujimori Y."/>
            <person name="Komiyama M."/>
            <person name="Tashiro H."/>
            <person name="Tanigami A."/>
            <person name="Fujiwara T."/>
            <person name="Ono T."/>
            <person name="Yamada K."/>
            <person name="Fujii Y."/>
            <person name="Ozaki K."/>
            <person name="Hirao M."/>
            <person name="Ohmori Y."/>
            <person name="Kawabata A."/>
            <person name="Hikiji T."/>
            <person name="Kobatake N."/>
            <person name="Inagaki H."/>
            <person name="Ikema Y."/>
            <person name="Okamoto S."/>
            <person name="Okitani R."/>
            <person name="Kawakami T."/>
            <person name="Noguchi S."/>
            <person name="Itoh T."/>
            <person name="Shigeta K."/>
            <person name="Senba T."/>
            <person name="Matsumura K."/>
            <person name="Nakajima Y."/>
            <person name="Mizuno T."/>
            <person name="Morinaga M."/>
            <person name="Sasaki M."/>
            <person name="Togashi T."/>
            <person name="Oyama M."/>
            <person name="Hata H."/>
            <person name="Watanabe M."/>
            <person name="Komatsu T."/>
            <person name="Mizushima-Sugano J."/>
            <person name="Satoh T."/>
            <person name="Shirai Y."/>
            <person name="Takahashi Y."/>
            <person name="Nakagawa K."/>
            <person name="Okumura K."/>
            <person name="Nagase T."/>
            <person name="Nomura N."/>
            <person name="Kikuchi H."/>
            <person name="Masuho Y."/>
            <person name="Yamashita R."/>
            <person name="Nakai K."/>
            <person name="Yada T."/>
            <person name="Nakamura Y."/>
            <person name="Ohara O."/>
            <person name="Isogai T."/>
            <person name="Sugano S."/>
        </authorList>
    </citation>
    <scope>NUCLEOTIDE SEQUENCE [LARGE SCALE MRNA] (ISOFORM 1)</scope>
</reference>
<reference key="4">
    <citation type="journal article" date="2005" name="Nature">
        <title>Generation and annotation of the DNA sequences of human chromosomes 2 and 4.</title>
        <authorList>
            <person name="Hillier L.W."/>
            <person name="Graves T.A."/>
            <person name="Fulton R.S."/>
            <person name="Fulton L.A."/>
            <person name="Pepin K.H."/>
            <person name="Minx P."/>
            <person name="Wagner-McPherson C."/>
            <person name="Layman D."/>
            <person name="Wylie K."/>
            <person name="Sekhon M."/>
            <person name="Becker M.C."/>
            <person name="Fewell G.A."/>
            <person name="Delehaunty K.D."/>
            <person name="Miner T.L."/>
            <person name="Nash W.E."/>
            <person name="Kremitzki C."/>
            <person name="Oddy L."/>
            <person name="Du H."/>
            <person name="Sun H."/>
            <person name="Bradshaw-Cordum H."/>
            <person name="Ali J."/>
            <person name="Carter J."/>
            <person name="Cordes M."/>
            <person name="Harris A."/>
            <person name="Isak A."/>
            <person name="van Brunt A."/>
            <person name="Nguyen C."/>
            <person name="Du F."/>
            <person name="Courtney L."/>
            <person name="Kalicki J."/>
            <person name="Ozersky P."/>
            <person name="Abbott S."/>
            <person name="Armstrong J."/>
            <person name="Belter E.A."/>
            <person name="Caruso L."/>
            <person name="Cedroni M."/>
            <person name="Cotton M."/>
            <person name="Davidson T."/>
            <person name="Desai A."/>
            <person name="Elliott G."/>
            <person name="Erb T."/>
            <person name="Fronick C."/>
            <person name="Gaige T."/>
            <person name="Haakenson W."/>
            <person name="Haglund K."/>
            <person name="Holmes A."/>
            <person name="Harkins R."/>
            <person name="Kim K."/>
            <person name="Kruchowski S.S."/>
            <person name="Strong C.M."/>
            <person name="Grewal N."/>
            <person name="Goyea E."/>
            <person name="Hou S."/>
            <person name="Levy A."/>
            <person name="Martinka S."/>
            <person name="Mead K."/>
            <person name="McLellan M.D."/>
            <person name="Meyer R."/>
            <person name="Randall-Maher J."/>
            <person name="Tomlinson C."/>
            <person name="Dauphin-Kohlberg S."/>
            <person name="Kozlowicz-Reilly A."/>
            <person name="Shah N."/>
            <person name="Swearengen-Shahid S."/>
            <person name="Snider J."/>
            <person name="Strong J.T."/>
            <person name="Thompson J."/>
            <person name="Yoakum M."/>
            <person name="Leonard S."/>
            <person name="Pearman C."/>
            <person name="Trani L."/>
            <person name="Radionenko M."/>
            <person name="Waligorski J.E."/>
            <person name="Wang C."/>
            <person name="Rock S.M."/>
            <person name="Tin-Wollam A.-M."/>
            <person name="Maupin R."/>
            <person name="Latreille P."/>
            <person name="Wendl M.C."/>
            <person name="Yang S.-P."/>
            <person name="Pohl C."/>
            <person name="Wallis J.W."/>
            <person name="Spieth J."/>
            <person name="Bieri T.A."/>
            <person name="Berkowicz N."/>
            <person name="Nelson J.O."/>
            <person name="Osborne J."/>
            <person name="Ding L."/>
            <person name="Meyer R."/>
            <person name="Sabo A."/>
            <person name="Shotland Y."/>
            <person name="Sinha P."/>
            <person name="Wohldmann P.E."/>
            <person name="Cook L.L."/>
            <person name="Hickenbotham M.T."/>
            <person name="Eldred J."/>
            <person name="Williams D."/>
            <person name="Jones T.A."/>
            <person name="She X."/>
            <person name="Ciccarelli F.D."/>
            <person name="Izaurralde E."/>
            <person name="Taylor J."/>
            <person name="Schmutz J."/>
            <person name="Myers R.M."/>
            <person name="Cox D.R."/>
            <person name="Huang X."/>
            <person name="McPherson J.D."/>
            <person name="Mardis E.R."/>
            <person name="Clifton S.W."/>
            <person name="Warren W.C."/>
            <person name="Chinwalla A.T."/>
            <person name="Eddy S.R."/>
            <person name="Marra M.A."/>
            <person name="Ovcharenko I."/>
            <person name="Furey T.S."/>
            <person name="Miller W."/>
            <person name="Eichler E.E."/>
            <person name="Bork P."/>
            <person name="Suyama M."/>
            <person name="Torrents D."/>
            <person name="Waterston R.H."/>
            <person name="Wilson R.K."/>
        </authorList>
    </citation>
    <scope>NUCLEOTIDE SEQUENCE [LARGE SCALE GENOMIC DNA]</scope>
</reference>
<reference key="5">
    <citation type="submission" date="2005-09" db="EMBL/GenBank/DDBJ databases">
        <authorList>
            <person name="Mural R.J."/>
            <person name="Istrail S."/>
            <person name="Sutton G.G."/>
            <person name="Florea L."/>
            <person name="Halpern A.L."/>
            <person name="Mobarry C.M."/>
            <person name="Lippert R."/>
            <person name="Walenz B."/>
            <person name="Shatkay H."/>
            <person name="Dew I."/>
            <person name="Miller J.R."/>
            <person name="Flanigan M.J."/>
            <person name="Edwards N.J."/>
            <person name="Bolanos R."/>
            <person name="Fasulo D."/>
            <person name="Halldorsson B.V."/>
            <person name="Hannenhalli S."/>
            <person name="Turner R."/>
            <person name="Yooseph S."/>
            <person name="Lu F."/>
            <person name="Nusskern D.R."/>
            <person name="Shue B.C."/>
            <person name="Zheng X.H."/>
            <person name="Zhong F."/>
            <person name="Delcher A.L."/>
            <person name="Huson D.H."/>
            <person name="Kravitz S.A."/>
            <person name="Mouchard L."/>
            <person name="Reinert K."/>
            <person name="Remington K.A."/>
            <person name="Clark A.G."/>
            <person name="Waterman M.S."/>
            <person name="Eichler E.E."/>
            <person name="Adams M.D."/>
            <person name="Hunkapiller M.W."/>
            <person name="Myers E.W."/>
            <person name="Venter J.C."/>
        </authorList>
    </citation>
    <scope>NUCLEOTIDE SEQUENCE [LARGE SCALE GENOMIC DNA]</scope>
</reference>
<reference key="6">
    <citation type="journal article" date="2004" name="Genome Res.">
        <title>The status, quality, and expansion of the NIH full-length cDNA project: the Mammalian Gene Collection (MGC).</title>
        <authorList>
            <consortium name="The MGC Project Team"/>
        </authorList>
    </citation>
    <scope>NUCLEOTIDE SEQUENCE [LARGE SCALE MRNA] (ISOFORM 2)</scope>
    <scope>VARIANT SER-74</scope>
    <source>
        <tissue>Lymph</tissue>
    </source>
</reference>
<reference key="7">
    <citation type="journal article" date="2003" name="Nature">
        <title>Proteomic characterization of the human centrosome by protein correlation profiling.</title>
        <authorList>
            <person name="Andersen J.S."/>
            <person name="Wilkinson C.J."/>
            <person name="Mayor T."/>
            <person name="Mortensen P."/>
            <person name="Nigg E.A."/>
            <person name="Mann M."/>
        </authorList>
    </citation>
    <scope>IDENTIFICATION BY MASS SPECTROMETRY</scope>
    <scope>SUBCELLULAR LOCATION [LARGE SCALE ANALYSIS]</scope>
    <source>
        <tissue>Lymphoblast</tissue>
    </source>
</reference>
<reference key="8">
    <citation type="journal article" date="2007" name="J. Cell Sci.">
        <title>Cep68 and Cep215 (Cdk5rap2) are required for centrosome cohesion.</title>
        <authorList>
            <person name="Graser S."/>
            <person name="Stierhof Y.D."/>
            <person name="Nigg E.A."/>
        </authorList>
    </citation>
    <scope>FUNCTION</scope>
    <scope>SUBCELLULAR LOCATION</scope>
</reference>
<reference key="9">
    <citation type="journal article" date="2008" name="Proc. Natl. Acad. Sci. U.S.A.">
        <title>A quantitative atlas of mitotic phosphorylation.</title>
        <authorList>
            <person name="Dephoure N."/>
            <person name="Zhou C."/>
            <person name="Villen J."/>
            <person name="Beausoleil S.A."/>
            <person name="Bakalarski C.E."/>
            <person name="Elledge S.J."/>
            <person name="Gygi S.P."/>
        </authorList>
    </citation>
    <scope>PHOSPHORYLATION [LARGE SCALE ANALYSIS] AT SER-478</scope>
    <scope>IDENTIFICATION BY MASS SPECTROMETRY [LARGE SCALE ANALYSIS]</scope>
    <source>
        <tissue>Cervix carcinoma</tissue>
    </source>
</reference>
<reference key="10">
    <citation type="journal article" date="2013" name="J. Proteome Res.">
        <title>Toward a comprehensive characterization of a human cancer cell phosphoproteome.</title>
        <authorList>
            <person name="Zhou H."/>
            <person name="Di Palma S."/>
            <person name="Preisinger C."/>
            <person name="Peng M."/>
            <person name="Polat A.N."/>
            <person name="Heck A.J."/>
            <person name="Mohammed S."/>
        </authorList>
    </citation>
    <scope>PHOSPHORYLATION [LARGE SCALE ANALYSIS] AT SER-478</scope>
    <scope>IDENTIFICATION BY MASS SPECTROMETRY [LARGE SCALE ANALYSIS]</scope>
    <source>
        <tissue>Erythroleukemia</tissue>
    </source>
</reference>
<reference key="11">
    <citation type="journal article" date="2014" name="J. Cell Sci.">
        <title>Centlein mediates an interaction between C-Nap1 and Cep68 to maintain centrosome cohesion.</title>
        <authorList>
            <person name="Fang G."/>
            <person name="Zhang D."/>
            <person name="Yin H."/>
            <person name="Zheng L."/>
            <person name="Bi X."/>
            <person name="Yuan L."/>
        </authorList>
    </citation>
    <scope>FUNCTION</scope>
    <scope>INTERACTION WITH CNTLN AND NEK2</scope>
    <scope>PHOSPHORYLATION</scope>
</reference>
<reference key="12">
    <citation type="journal article" date="2015" name="Eur. J. Cell Biol.">
        <title>Cep68 can be regulated by Nek2 and SCF complex.</title>
        <authorList>
            <person name="Man X."/>
            <person name="Megraw T.L."/>
            <person name="Lim Y.P."/>
        </authorList>
    </citation>
    <scope>INTERACTION WITH BTRC</scope>
    <scope>SUBCELLULAR LOCATION</scope>
    <scope>PHOSPHORYLATION</scope>
    <scope>PROTEOLYTIC DEGRADATION</scope>
</reference>
<reference key="13">
    <citation type="journal article" date="2015" name="Nat. Cell Biol.">
        <title>Degradation of Cep68 and PCNT cleavage mediate Cep215 removal from the PCM to allow centriole separation, disengagement and licensing.</title>
        <authorList>
            <person name="Pagan J.K."/>
            <person name="Marzio A."/>
            <person name="Jones M.J."/>
            <person name="Saraf A."/>
            <person name="Jallepalli P.V."/>
            <person name="Florens L."/>
            <person name="Washburn M.P."/>
            <person name="Pagano M."/>
        </authorList>
    </citation>
    <scope>FUNCTION</scope>
    <scope>SUBCELLULAR LOCATION</scope>
    <scope>INTERACTION WITH SCF(FBXW11) COMPLEX AND BTRC</scope>
    <scope>MUTAGENESIS OF 331-ASP--ASP-337; SER-332 AND ASP-337</scope>
    <scope>PHOSPHORYLATION AT SER-332</scope>
    <scope>PROTEOLYTIC DEGRADATION</scope>
</reference>
<reference key="14">
    <citation type="journal article" date="2018" name="J. Cell Sci.">
        <title>CCDC102B functions in centrosome linker assembly and centrosome cohesion.</title>
        <authorList>
            <person name="Xia Y."/>
            <person name="Huang N."/>
            <person name="Chen Z."/>
            <person name="Li F."/>
            <person name="Fan G."/>
            <person name="Ma D."/>
            <person name="Chen J."/>
            <person name="Teng J."/>
        </authorList>
    </citation>
    <scope>FUNCTION</scope>
</reference>
<reference key="15">
    <citation type="journal article" date="2020" name="J. Cell Sci.">
        <title>Cep44 functions in centrosome cohesion by stabilizing rootletin.</title>
        <authorList>
            <person name="Hossain D."/>
            <person name="Shih S.Y."/>
            <person name="Xiao X."/>
            <person name="White J."/>
            <person name="Tsang W.Y."/>
        </authorList>
    </citation>
    <scope>SUBCELLULAR LOCATION</scope>
</reference>
<comment type="function">
    <text evidence="6 7 8 10">Involved in maintenance of centrosome cohesion, probably as part of a linker structure which prevents centrosome splitting (PubMed:18042621). Required for localization of CDK5RAP2 to the centrosome during interphase (PubMed:24554434, PubMed:25503564). Contributes to CROCC/rootletin filament formation (PubMed:30404835).</text>
</comment>
<comment type="subunit">
    <text evidence="6 7 8 9">Interacts with CNTLN; the interaction recruits CEP68 to the centrosome (PubMed:24554434). Interacts with the SCF(FBXW11) complex which contains SKP1, CUL1 and FBXW11; the interaction is probably mediated by FBXW11 and the complex also contains CDK5RAP2 and PCNT (PubMed:25503564). Also interacts with F-box protein BTRC (PubMed:25503564, PubMed:25704143). Interacts with serine/threonine-protein kinase PLK1; the interaction leads to phosphorylation of CEP68 and its subsequent degradation (PubMed:25503564). Interacts with NEK2; the interaction leads to phosphorylation of CEP68 (PubMed:24554434).</text>
</comment>
<comment type="interaction">
    <interactant intactId="EBI-9051024">
        <id>Q76N32</id>
    </interactant>
    <interactant intactId="EBI-307461">
        <id>Q9Y297</id>
        <label>BTRC</label>
    </interactant>
    <organismsDiffer>false</organismsDiffer>
    <experiments>2</experiments>
</comment>
<comment type="interaction">
    <interactant intactId="EBI-9051024">
        <id>Q76N32</id>
    </interactant>
    <interactant intactId="EBI-308374">
        <id>Q96SN8</id>
        <label>CDK5RAP2</label>
    </interactant>
    <organismsDiffer>false</organismsDiffer>
    <experiments>8</experiments>
</comment>
<comment type="interaction">
    <interactant intactId="EBI-9051024">
        <id>Q76N32</id>
    </interactant>
    <interactant intactId="EBI-10171858">
        <id>Q13363-2</id>
        <label>CTBP1</label>
    </interactant>
    <organismsDiffer>false</organismsDiffer>
    <experiments>3</experiments>
</comment>
<comment type="interaction">
    <interactant intactId="EBI-9051024">
        <id>Q76N32</id>
    </interactant>
    <interactant intactId="EBI-530012">
        <id>O95613</id>
        <label>PCNT</label>
    </interactant>
    <organismsDiffer>false</organismsDiffer>
    <experiments>3</experiments>
</comment>
<comment type="interaction">
    <interactant intactId="EBI-9051024">
        <id>Q76N32</id>
    </interactant>
    <interactant intactId="EBI-476768">
        <id>P53350</id>
        <label>PLK1</label>
    </interactant>
    <organismsDiffer>false</organismsDiffer>
    <experiments>2</experiments>
</comment>
<comment type="interaction">
    <interactant intactId="EBI-9051024">
        <id>Q76N32</id>
    </interactant>
    <interactant intactId="EBI-739895">
        <id>Q8N6Y0</id>
        <label>USHBP1</label>
    </interactant>
    <organismsDiffer>false</organismsDiffer>
    <experiments>3</experiments>
</comment>
<comment type="interaction">
    <interactant intactId="EBI-11975967">
        <id>Q76N32-2</id>
    </interactant>
    <interactant intactId="EBI-389449">
        <id>Q14746</id>
        <label>COG2</label>
    </interactant>
    <organismsDiffer>false</organismsDiffer>
    <experiments>3</experiments>
</comment>
<comment type="interaction">
    <interactant intactId="EBI-11975967">
        <id>Q76N32-2</id>
    </interactant>
    <interactant intactId="EBI-10171902">
        <id>P56545-3</id>
        <label>CTBP2</label>
    </interactant>
    <organismsDiffer>false</organismsDiffer>
    <experiments>3</experiments>
</comment>
<comment type="interaction">
    <interactant intactId="EBI-11975967">
        <id>Q76N32-2</id>
    </interactant>
    <interactant intactId="EBI-740220">
        <id>O14964</id>
        <label>HGS</label>
    </interactant>
    <organismsDiffer>false</organismsDiffer>
    <experiments>3</experiments>
</comment>
<comment type="interaction">
    <interactant intactId="EBI-11975967">
        <id>Q76N32-2</id>
    </interactant>
    <interactant intactId="EBI-765817">
        <id>Q9Y228</id>
        <label>TRAF3IP3</label>
    </interactant>
    <organismsDiffer>false</organismsDiffer>
    <experiments>3</experiments>
</comment>
<comment type="interaction">
    <interactant intactId="EBI-11975967">
        <id>Q76N32-2</id>
    </interactant>
    <interactant intactId="EBI-21353855">
        <id>Q99598</id>
        <label>TSNAX</label>
    </interactant>
    <organismsDiffer>false</organismsDiffer>
    <experiments>3</experiments>
</comment>
<comment type="interaction">
    <interactant intactId="EBI-11975967">
        <id>Q76N32-2</id>
    </interactant>
    <interactant intactId="EBI-739895">
        <id>Q8N6Y0</id>
        <label>USHBP1</label>
    </interactant>
    <organismsDiffer>false</organismsDiffer>
    <experiments>3</experiments>
</comment>
<comment type="subcellular location">
    <subcellularLocation>
        <location evidence="4 6 8 9 11">Cytoplasm</location>
        <location evidence="4 6 8 9 11">Cytoskeleton</location>
        <location evidence="4 6 8 9 11">Microtubule organizing center</location>
        <location evidence="4 6 8 9 11">Centrosome</location>
    </subcellularLocation>
    <text evidence="6 8 9">Localizes to thin fibers protruding away from the proximal ends of the two centrioles. Dissociates from interphase centrosomes at the onset of mitosis.</text>
</comment>
<comment type="alternative products">
    <event type="alternative splicing"/>
    <isoform>
        <id>Q76N32-1</id>
        <name>1</name>
        <sequence type="displayed"/>
    </isoform>
    <isoform>
        <id>Q76N32-2</id>
        <name>2</name>
        <sequence type="described" ref="VSP_013476"/>
    </isoform>
</comment>
<comment type="PTM">
    <text evidence="7 8 9">Phosphorylation by PLK1 is required for binding to BTRC in prometaphase (PubMed:25503564). Phosphorylated directly or indirectly by NEK2 (PubMed:24554434). NEK2-mediated phosphorylation promotes CEP68 dissociation from the centrosome and its degradation at the onset of mitosis (PubMed:25704143).</text>
</comment>
<comment type="PTM">
    <text evidence="8 9">Ubiquitinated and targeted for proteasomal degradation in early mitosis by the SCF(BTRC) and/or SCF(FBXW11) E3 ubiquitin-protein ligase complexes (PubMed:25503564, PubMed:25704143). Degradation is complete by prometaphase and is required for removal of CDK5RAP2 from the peripheral pericentriolar material and subsequent centriole separation (PubMed:25503564).</text>
</comment>
<comment type="sequence caution" evidence="13">
    <conflict type="erroneous initiation">
        <sequence resource="EMBL-CDS" id="BAA25508"/>
    </conflict>
    <text>Extended N-terminus.</text>
</comment>
<feature type="chain" id="PRO_0000089494" description="Centrosomal protein of 68 kDa">
    <location>
        <begin position="1"/>
        <end position="757"/>
    </location>
</feature>
<feature type="region of interest" description="Disordered" evidence="2">
    <location>
        <begin position="1"/>
        <end position="47"/>
    </location>
</feature>
<feature type="region of interest" description="Disordered" evidence="2">
    <location>
        <begin position="67"/>
        <end position="158"/>
    </location>
</feature>
<feature type="region of interest" description="Disordered" evidence="2">
    <location>
        <begin position="192"/>
        <end position="259"/>
    </location>
</feature>
<feature type="region of interest" description="Disordered" evidence="2">
    <location>
        <begin position="311"/>
        <end position="480"/>
    </location>
</feature>
<feature type="region of interest" description="Disordered" evidence="2">
    <location>
        <begin position="509"/>
        <end position="551"/>
    </location>
</feature>
<feature type="region of interest" description="Disordered" evidence="2">
    <location>
        <begin position="597"/>
        <end position="618"/>
    </location>
</feature>
<feature type="compositionally biased region" description="Basic and acidic residues" evidence="2">
    <location>
        <begin position="1"/>
        <end position="17"/>
    </location>
</feature>
<feature type="compositionally biased region" description="Basic and acidic residues" evidence="2">
    <location>
        <begin position="86"/>
        <end position="96"/>
    </location>
</feature>
<feature type="compositionally biased region" description="Polar residues" evidence="2">
    <location>
        <begin position="125"/>
        <end position="144"/>
    </location>
</feature>
<feature type="compositionally biased region" description="Low complexity" evidence="2">
    <location>
        <begin position="192"/>
        <end position="206"/>
    </location>
</feature>
<feature type="compositionally biased region" description="Low complexity" evidence="2">
    <location>
        <begin position="224"/>
        <end position="240"/>
    </location>
</feature>
<feature type="compositionally biased region" description="Polar residues" evidence="2">
    <location>
        <begin position="339"/>
        <end position="355"/>
    </location>
</feature>
<feature type="compositionally biased region" description="Basic and acidic residues" evidence="2">
    <location>
        <begin position="405"/>
        <end position="432"/>
    </location>
</feature>
<feature type="compositionally biased region" description="Basic and acidic residues" evidence="2">
    <location>
        <begin position="439"/>
        <end position="456"/>
    </location>
</feature>
<feature type="compositionally biased region" description="Polar residues" evidence="2">
    <location>
        <begin position="457"/>
        <end position="467"/>
    </location>
</feature>
<feature type="compositionally biased region" description="Low complexity" evidence="2">
    <location>
        <begin position="524"/>
        <end position="543"/>
    </location>
</feature>
<feature type="modified residue" description="Phosphoserine; by PLK1" evidence="8">
    <location>
        <position position="332"/>
    </location>
</feature>
<feature type="modified residue" description="Phosphoserine" evidence="1">
    <location>
        <position position="472"/>
    </location>
</feature>
<feature type="modified residue" description="Phosphoserine" evidence="14 15">
    <location>
        <position position="478"/>
    </location>
</feature>
<feature type="splice variant" id="VSP_013476" description="In isoform 2." evidence="12">
    <location>
        <begin position="492"/>
        <end position="628"/>
    </location>
</feature>
<feature type="sequence variant" id="VAR_050794" description="In dbSNP:rs12611491.">
    <original>R</original>
    <variation>G</variation>
    <location>
        <position position="27"/>
    </location>
</feature>
<feature type="sequence variant" id="VAR_022363" description="In dbSNP:rs7572857." evidence="5">
    <original>G</original>
    <variation>S</variation>
    <location>
        <position position="74"/>
    </location>
</feature>
<feature type="sequence variant" id="VAR_050795" description="In dbSNP:rs35501092.">
    <original>L</original>
    <variation>P</variation>
    <location>
        <position position="397"/>
    </location>
</feature>
<feature type="sequence variant" id="VAR_050796" description="In dbSNP:rs35694840.">
    <original>R</original>
    <variation>C</variation>
    <location>
        <position position="462"/>
    </location>
</feature>
<feature type="sequence variant" id="VAR_050797" description="In dbSNP:rs35089924.">
    <original>E</original>
    <variation>Q</variation>
    <location>
        <position position="473"/>
    </location>
</feature>
<feature type="mutagenesis site" description="Prevents binding to BTRC and down-regulation of CEP68 during mitosis." evidence="8">
    <location>
        <begin position="331"/>
        <end position="337"/>
    </location>
</feature>
<feature type="mutagenesis site" description="Prevents binding to BTRC and down-regulation of CEP68 during mitosis." evidence="8">
    <original>S</original>
    <variation>A</variation>
    <location>
        <position position="332"/>
    </location>
</feature>
<feature type="mutagenesis site" description="Reduces CEP68 binding to BTRC." evidence="3">
    <original>D</original>
    <variation>A</variation>
    <location>
        <position position="337"/>
    </location>
</feature>
<protein>
    <recommendedName>
        <fullName>Centrosomal protein of 68 kDa</fullName>
        <shortName>Cep68</shortName>
    </recommendedName>
</protein>
<sequence length="757" mass="81102">MALGEEKAEAEASEDTKAQSYGRGSCRERELDIPGPMSGEQPPRLEAEGGLISPVWGAEGIPAPTCWIGTDPGGPSRAHQPQASDANREPVAERSEPALSGLPPATMGSGDLLLSGESQVEKTKLSSSEEFPQTLSLPRTTTICSGHDADTEDDPSLADLPQALDLSQQPHSSGLSCLSQWKSVLSPGSAAQPSSCSISASSTGSSLQGHQERAEPRGGSLAKVSSSLEPVVPQEPSSVVGLGPRPQWSPQPVFSGGDASGLGRRRLSFQAEYWACVLPDSLPPSPDRHSPLWNPNKEYEDLLDYTYPLRPGPQLPKHLDSRVPADPVLQDSGVDLDSFSVSPASTLKSPTNVSPNCPPAEATALPFSGPREPSLKQWPSRVPQKQGGMGLASWSQLASTPRAPGSRDARWERREPALRGAKDRLTIGKHLDMGSPQLRTRDRGWPSPRPEREKRTSQSARRPTCTESRWKSEEEVESDDEYLALPARLTQVSSLVSYLGSISTLVTLPTGDIKGQSPLEVSDSDGPASFPSSSSQSQLPPGAALQGSGDPEGQNPCFLRSFVRAHDSAGEGSLGSSQALGVSSGLLKTRPSLPARLDRWPFSDPDVEGQLPRKGGEQGKESLVQCVKTFCCQLEELICWLYNVADVTDHGTAARSNLTSLKSSLQLYRQFKKDIDEHQSLTESVLQKGEILLQCLLENTPVLEDVLGRIAKQSGELESHADRLYDSILASLDMLAGCTLIPDKKPMAAMEHPCEGV</sequence>
<gene>
    <name type="primary">CEP68</name>
    <name type="synonym">KIAA0582</name>
</gene>
<proteinExistence type="evidence at protein level"/>
<keyword id="KW-0025">Alternative splicing</keyword>
<keyword id="KW-0963">Cytoplasm</keyword>
<keyword id="KW-0206">Cytoskeleton</keyword>
<keyword id="KW-0597">Phosphoprotein</keyword>
<keyword id="KW-1267">Proteomics identification</keyword>
<keyword id="KW-1185">Reference proteome</keyword>
<keyword id="KW-0832">Ubl conjugation</keyword>
<dbReference type="EMBL" id="AB011154">
    <property type="protein sequence ID" value="BAA25508.2"/>
    <property type="status" value="ALT_INIT"/>
    <property type="molecule type" value="mRNA"/>
</dbReference>
<dbReference type="EMBL" id="AC007386">
    <property type="protein sequence ID" value="AAF03518.2"/>
    <property type="molecule type" value="Genomic_DNA"/>
</dbReference>
<dbReference type="EMBL" id="AK299373">
    <property type="protein sequence ID" value="BAG61363.1"/>
    <property type="molecule type" value="mRNA"/>
</dbReference>
<dbReference type="EMBL" id="CH471053">
    <property type="protein sequence ID" value="EAW99926.1"/>
    <property type="molecule type" value="Genomic_DNA"/>
</dbReference>
<dbReference type="EMBL" id="CH471053">
    <property type="protein sequence ID" value="EAW99927.1"/>
    <property type="molecule type" value="Genomic_DNA"/>
</dbReference>
<dbReference type="EMBL" id="CH471053">
    <property type="protein sequence ID" value="EAW99928.1"/>
    <property type="molecule type" value="Genomic_DNA"/>
</dbReference>
<dbReference type="EMBL" id="CH471053">
    <property type="protein sequence ID" value="EAW99929.1"/>
    <property type="molecule type" value="Genomic_DNA"/>
</dbReference>
<dbReference type="EMBL" id="BC002982">
    <property type="protein sequence ID" value="AAH02982.1"/>
    <property type="molecule type" value="mRNA"/>
</dbReference>
<dbReference type="EMBL" id="BC004873">
    <property type="protein sequence ID" value="AAH04873.1"/>
    <property type="molecule type" value="mRNA"/>
</dbReference>
<dbReference type="CCDS" id="CCDS1880.2">
    <molecule id="Q76N32-1"/>
</dbReference>
<dbReference type="CCDS" id="CCDS82457.1">
    <molecule id="Q76N32-2"/>
</dbReference>
<dbReference type="RefSeq" id="NP_001306029.1">
    <molecule id="Q76N32-1"/>
    <property type="nucleotide sequence ID" value="NM_001319100.2"/>
</dbReference>
<dbReference type="RefSeq" id="NP_001306030.1">
    <molecule id="Q76N32-2"/>
    <property type="nucleotide sequence ID" value="NM_001319101.2"/>
</dbReference>
<dbReference type="RefSeq" id="NP_055962.2">
    <molecule id="Q76N32-1"/>
    <property type="nucleotide sequence ID" value="NM_015147.3"/>
</dbReference>
<dbReference type="SMR" id="Q76N32"/>
<dbReference type="BioGRID" id="116789">
    <property type="interactions" value="24"/>
</dbReference>
<dbReference type="DIP" id="DIP-57845N"/>
<dbReference type="FunCoup" id="Q76N32">
    <property type="interactions" value="1565"/>
</dbReference>
<dbReference type="IntAct" id="Q76N32">
    <property type="interactions" value="25"/>
</dbReference>
<dbReference type="STRING" id="9606.ENSP00000367229"/>
<dbReference type="GlyGen" id="Q76N32">
    <property type="glycosylation" value="2 sites, 1 N-linked glycan (1 site), 1 O-linked glycan (1 site)"/>
</dbReference>
<dbReference type="iPTMnet" id="Q76N32"/>
<dbReference type="PhosphoSitePlus" id="Q76N32"/>
<dbReference type="BioMuta" id="CEP68"/>
<dbReference type="DMDM" id="62899863"/>
<dbReference type="jPOST" id="Q76N32"/>
<dbReference type="MassIVE" id="Q76N32"/>
<dbReference type="PaxDb" id="9606-ENSP00000367229"/>
<dbReference type="PeptideAtlas" id="Q76N32"/>
<dbReference type="ProteomicsDB" id="68690">
    <molecule id="Q76N32-1"/>
</dbReference>
<dbReference type="ProteomicsDB" id="68691">
    <molecule id="Q76N32-2"/>
</dbReference>
<dbReference type="Pumba" id="Q76N32"/>
<dbReference type="Antibodypedia" id="47440">
    <property type="antibodies" value="222 antibodies from 24 providers"/>
</dbReference>
<dbReference type="DNASU" id="23177"/>
<dbReference type="Ensembl" id="ENST00000260569.4">
    <molecule id="Q76N32-2"/>
    <property type="protein sequence ID" value="ENSP00000260569.4"/>
    <property type="gene ID" value="ENSG00000011523.15"/>
</dbReference>
<dbReference type="Ensembl" id="ENST00000377990.7">
    <molecule id="Q76N32-1"/>
    <property type="protein sequence ID" value="ENSP00000367229.2"/>
    <property type="gene ID" value="ENSG00000011523.15"/>
</dbReference>
<dbReference type="GeneID" id="23177"/>
<dbReference type="KEGG" id="hsa:23177"/>
<dbReference type="MANE-Select" id="ENST00000377990.7">
    <property type="protein sequence ID" value="ENSP00000367229.2"/>
    <property type="RefSeq nucleotide sequence ID" value="NM_015147.3"/>
    <property type="RefSeq protein sequence ID" value="NP_055962.2"/>
</dbReference>
<dbReference type="UCSC" id="uc002sdk.5">
    <molecule id="Q76N32-1"/>
    <property type="organism name" value="human"/>
</dbReference>
<dbReference type="AGR" id="HGNC:29076"/>
<dbReference type="CTD" id="23177"/>
<dbReference type="DisGeNET" id="23177"/>
<dbReference type="GeneCards" id="CEP68"/>
<dbReference type="HGNC" id="HGNC:29076">
    <property type="gene designation" value="CEP68"/>
</dbReference>
<dbReference type="HPA" id="ENSG00000011523">
    <property type="expression patterns" value="Low tissue specificity"/>
</dbReference>
<dbReference type="MIM" id="616889">
    <property type="type" value="gene"/>
</dbReference>
<dbReference type="neXtProt" id="NX_Q76N32"/>
<dbReference type="OpenTargets" id="ENSG00000011523"/>
<dbReference type="PharmGKB" id="PA134991391"/>
<dbReference type="VEuPathDB" id="HostDB:ENSG00000011523"/>
<dbReference type="eggNOG" id="ENOG502RK93">
    <property type="taxonomic scope" value="Eukaryota"/>
</dbReference>
<dbReference type="GeneTree" id="ENSGT00810000125473"/>
<dbReference type="HOGENOM" id="CLU_370860_0_0_1"/>
<dbReference type="InParanoid" id="Q76N32"/>
<dbReference type="OMA" id="WDRGWPL"/>
<dbReference type="OrthoDB" id="9448174at2759"/>
<dbReference type="PAN-GO" id="Q76N32">
    <property type="GO annotations" value="0 GO annotations based on evolutionary models"/>
</dbReference>
<dbReference type="PhylomeDB" id="Q76N32"/>
<dbReference type="TreeFam" id="TF333570"/>
<dbReference type="PathwayCommons" id="Q76N32"/>
<dbReference type="SignaLink" id="Q76N32"/>
<dbReference type="SIGNOR" id="Q76N32"/>
<dbReference type="BioGRID-ORCS" id="23177">
    <property type="hits" value="115 hits in 1164 CRISPR screens"/>
</dbReference>
<dbReference type="CD-CODE" id="8C2F96ED">
    <property type="entry name" value="Centrosome"/>
</dbReference>
<dbReference type="ChiTaRS" id="CEP68">
    <property type="organism name" value="human"/>
</dbReference>
<dbReference type="GeneWiki" id="CEP68"/>
<dbReference type="GenomeRNAi" id="23177"/>
<dbReference type="Pharos" id="Q76N32">
    <property type="development level" value="Tbio"/>
</dbReference>
<dbReference type="PRO" id="PR:Q76N32"/>
<dbReference type="Proteomes" id="UP000005640">
    <property type="component" value="Chromosome 2"/>
</dbReference>
<dbReference type="RNAct" id="Q76N32">
    <property type="molecule type" value="protein"/>
</dbReference>
<dbReference type="Bgee" id="ENSG00000011523">
    <property type="expression patterns" value="Expressed in biceps brachii and 214 other cell types or tissues"/>
</dbReference>
<dbReference type="ExpressionAtlas" id="Q76N32">
    <property type="expression patterns" value="baseline and differential"/>
</dbReference>
<dbReference type="GO" id="GO:0030054">
    <property type="term" value="C:cell junction"/>
    <property type="evidence" value="ECO:0000314"/>
    <property type="project" value="HPA"/>
</dbReference>
<dbReference type="GO" id="GO:0034451">
    <property type="term" value="C:centriolar satellite"/>
    <property type="evidence" value="ECO:0000314"/>
    <property type="project" value="HPA"/>
</dbReference>
<dbReference type="GO" id="GO:0005813">
    <property type="term" value="C:centrosome"/>
    <property type="evidence" value="ECO:0000314"/>
    <property type="project" value="UniProtKB"/>
</dbReference>
<dbReference type="GO" id="GO:0036064">
    <property type="term" value="C:ciliary basal body"/>
    <property type="evidence" value="ECO:0000314"/>
    <property type="project" value="HPA"/>
</dbReference>
<dbReference type="GO" id="GO:0005829">
    <property type="term" value="C:cytosol"/>
    <property type="evidence" value="ECO:0000314"/>
    <property type="project" value="HPA"/>
</dbReference>
<dbReference type="GO" id="GO:0005654">
    <property type="term" value="C:nucleoplasm"/>
    <property type="evidence" value="ECO:0000314"/>
    <property type="project" value="HPA"/>
</dbReference>
<dbReference type="GO" id="GO:0019904">
    <property type="term" value="F:protein domain specific binding"/>
    <property type="evidence" value="ECO:0000353"/>
    <property type="project" value="UniProtKB"/>
</dbReference>
<dbReference type="GO" id="GO:0019901">
    <property type="term" value="F:protein kinase binding"/>
    <property type="evidence" value="ECO:0000353"/>
    <property type="project" value="UniProtKB"/>
</dbReference>
<dbReference type="GO" id="GO:0010457">
    <property type="term" value="P:centriole-centriole cohesion"/>
    <property type="evidence" value="ECO:0000315"/>
    <property type="project" value="UniProtKB"/>
</dbReference>
<dbReference type="GO" id="GO:0007098">
    <property type="term" value="P:centrosome cycle"/>
    <property type="evidence" value="ECO:0000315"/>
    <property type="project" value="UniProtKB"/>
</dbReference>
<dbReference type="GO" id="GO:0033365">
    <property type="term" value="P:protein localization to organelle"/>
    <property type="evidence" value="ECO:0000315"/>
    <property type="project" value="UniProtKB"/>
</dbReference>
<dbReference type="FunFam" id="1.20.58.60:FF:000296">
    <property type="entry name" value="centrosomal protein of 68 kDa"/>
    <property type="match status" value="1"/>
</dbReference>
<dbReference type="Gene3D" id="1.20.58.60">
    <property type="match status" value="1"/>
</dbReference>
<dbReference type="SUPFAM" id="SSF46966">
    <property type="entry name" value="Spectrin repeat"/>
    <property type="match status" value="1"/>
</dbReference>
<evidence type="ECO:0000250" key="1">
    <source>
        <dbReference type="UniProtKB" id="Q8C0D9"/>
    </source>
</evidence>
<evidence type="ECO:0000256" key="2">
    <source>
        <dbReference type="SAM" id="MobiDB-lite"/>
    </source>
</evidence>
<evidence type="ECO:0000269" key="3">
    <source>
    </source>
</evidence>
<evidence type="ECO:0000269" key="4">
    <source>
    </source>
</evidence>
<evidence type="ECO:0000269" key="5">
    <source>
    </source>
</evidence>
<evidence type="ECO:0000269" key="6">
    <source>
    </source>
</evidence>
<evidence type="ECO:0000269" key="7">
    <source>
    </source>
</evidence>
<evidence type="ECO:0000269" key="8">
    <source>
    </source>
</evidence>
<evidence type="ECO:0000269" key="9">
    <source>
    </source>
</evidence>
<evidence type="ECO:0000269" key="10">
    <source>
    </source>
</evidence>
<evidence type="ECO:0000269" key="11">
    <source>
    </source>
</evidence>
<evidence type="ECO:0000303" key="12">
    <source>
    </source>
</evidence>
<evidence type="ECO:0000305" key="13"/>
<evidence type="ECO:0007744" key="14">
    <source>
    </source>
</evidence>
<evidence type="ECO:0007744" key="15">
    <source>
    </source>
</evidence>